<keyword id="KW-0378">Hydrolase</keyword>
<keyword id="KW-0479">Metal-binding</keyword>
<keyword id="KW-1185">Reference proteome</keyword>
<keyword id="KW-0862">Zinc</keyword>
<organism>
    <name type="scientific">Shigella flexneri</name>
    <dbReference type="NCBI Taxonomy" id="623"/>
    <lineage>
        <taxon>Bacteria</taxon>
        <taxon>Pseudomonadati</taxon>
        <taxon>Pseudomonadota</taxon>
        <taxon>Gammaproteobacteria</taxon>
        <taxon>Enterobacterales</taxon>
        <taxon>Enterobacteriaceae</taxon>
        <taxon>Shigella</taxon>
    </lineage>
</organism>
<accession>Q83LK1</accession>
<accession>Q7C245</accession>
<gene>
    <name evidence="1" type="primary">ycdX</name>
    <name type="ordered locus">SF1028</name>
    <name type="ordered locus">S1101</name>
</gene>
<reference key="1">
    <citation type="journal article" date="2002" name="Nucleic Acids Res.">
        <title>Genome sequence of Shigella flexneri 2a: insights into pathogenicity through comparison with genomes of Escherichia coli K12 and O157.</title>
        <authorList>
            <person name="Jin Q."/>
            <person name="Yuan Z."/>
            <person name="Xu J."/>
            <person name="Wang Y."/>
            <person name="Shen Y."/>
            <person name="Lu W."/>
            <person name="Wang J."/>
            <person name="Liu H."/>
            <person name="Yang J."/>
            <person name="Yang F."/>
            <person name="Zhang X."/>
            <person name="Zhang J."/>
            <person name="Yang G."/>
            <person name="Wu H."/>
            <person name="Qu D."/>
            <person name="Dong J."/>
            <person name="Sun L."/>
            <person name="Xue Y."/>
            <person name="Zhao A."/>
            <person name="Gao Y."/>
            <person name="Zhu J."/>
            <person name="Kan B."/>
            <person name="Ding K."/>
            <person name="Chen S."/>
            <person name="Cheng H."/>
            <person name="Yao Z."/>
            <person name="He B."/>
            <person name="Chen R."/>
            <person name="Ma D."/>
            <person name="Qiang B."/>
            <person name="Wen Y."/>
            <person name="Hou Y."/>
            <person name="Yu J."/>
        </authorList>
    </citation>
    <scope>NUCLEOTIDE SEQUENCE [LARGE SCALE GENOMIC DNA]</scope>
    <source>
        <strain>301 / Serotype 2a</strain>
    </source>
</reference>
<reference key="2">
    <citation type="journal article" date="2003" name="Infect. Immun.">
        <title>Complete genome sequence and comparative genomics of Shigella flexneri serotype 2a strain 2457T.</title>
        <authorList>
            <person name="Wei J."/>
            <person name="Goldberg M.B."/>
            <person name="Burland V."/>
            <person name="Venkatesan M.M."/>
            <person name="Deng W."/>
            <person name="Fournier G."/>
            <person name="Mayhew G.F."/>
            <person name="Plunkett G. III"/>
            <person name="Rose D.J."/>
            <person name="Darling A."/>
            <person name="Mau B."/>
            <person name="Perna N.T."/>
            <person name="Payne S.M."/>
            <person name="Runyen-Janecky L.J."/>
            <person name="Zhou S."/>
            <person name="Schwartz D.C."/>
            <person name="Blattner F.R."/>
        </authorList>
    </citation>
    <scope>NUCLEOTIDE SEQUENCE [LARGE SCALE GENOMIC DNA]</scope>
    <source>
        <strain>ATCC 700930 / 2457T / Serotype 2a</strain>
    </source>
</reference>
<dbReference type="EC" id="3.1.3.-" evidence="1"/>
<dbReference type="EMBL" id="AE005674">
    <property type="protein sequence ID" value="AAN42652.1"/>
    <property type="molecule type" value="Genomic_DNA"/>
</dbReference>
<dbReference type="EMBL" id="AE014073">
    <property type="protein sequence ID" value="AAP16536.1"/>
    <property type="molecule type" value="Genomic_DNA"/>
</dbReference>
<dbReference type="RefSeq" id="NP_706945.1">
    <property type="nucleotide sequence ID" value="NC_004337.2"/>
</dbReference>
<dbReference type="RefSeq" id="WP_000283673.1">
    <property type="nucleotide sequence ID" value="NZ_WPGW01000114.1"/>
</dbReference>
<dbReference type="SMR" id="Q83LK1"/>
<dbReference type="STRING" id="198214.SF1028"/>
<dbReference type="PaxDb" id="198214-SF1028"/>
<dbReference type="GeneID" id="1024000"/>
<dbReference type="KEGG" id="sfl:SF1028"/>
<dbReference type="KEGG" id="sfx:S1101"/>
<dbReference type="PATRIC" id="fig|198214.7.peg.1195"/>
<dbReference type="HOGENOM" id="CLU_061999_0_1_6"/>
<dbReference type="Proteomes" id="UP000001006">
    <property type="component" value="Chromosome"/>
</dbReference>
<dbReference type="Proteomes" id="UP000002673">
    <property type="component" value="Chromosome"/>
</dbReference>
<dbReference type="GO" id="GO:0005829">
    <property type="term" value="C:cytosol"/>
    <property type="evidence" value="ECO:0007669"/>
    <property type="project" value="TreeGrafter"/>
</dbReference>
<dbReference type="GO" id="GO:0016791">
    <property type="term" value="F:phosphatase activity"/>
    <property type="evidence" value="ECO:0007669"/>
    <property type="project" value="UniProtKB-UniRule"/>
</dbReference>
<dbReference type="GO" id="GO:0008270">
    <property type="term" value="F:zinc ion binding"/>
    <property type="evidence" value="ECO:0007669"/>
    <property type="project" value="UniProtKB-UniRule"/>
</dbReference>
<dbReference type="GO" id="GO:0071978">
    <property type="term" value="P:bacterial-type flagellum-dependent swarming motility"/>
    <property type="evidence" value="ECO:0007669"/>
    <property type="project" value="TreeGrafter"/>
</dbReference>
<dbReference type="CDD" id="cd07437">
    <property type="entry name" value="PHP_HisPPase_Ycdx_like"/>
    <property type="match status" value="1"/>
</dbReference>
<dbReference type="FunFam" id="3.20.20.140:FF:000008">
    <property type="entry name" value="Probable phosphatase YcdX"/>
    <property type="match status" value="1"/>
</dbReference>
<dbReference type="Gene3D" id="3.20.20.140">
    <property type="entry name" value="Metal-dependent hydrolases"/>
    <property type="match status" value="1"/>
</dbReference>
<dbReference type="HAMAP" id="MF_01561">
    <property type="entry name" value="YcdX_phosphat"/>
    <property type="match status" value="1"/>
</dbReference>
<dbReference type="InterPro" id="IPR023710">
    <property type="entry name" value="Phosphatase_YcdX_put"/>
</dbReference>
<dbReference type="InterPro" id="IPR004013">
    <property type="entry name" value="PHP_dom"/>
</dbReference>
<dbReference type="InterPro" id="IPR050243">
    <property type="entry name" value="PHP_phosphatase"/>
</dbReference>
<dbReference type="InterPro" id="IPR003141">
    <property type="entry name" value="Pol/His_phosphatase_N"/>
</dbReference>
<dbReference type="InterPro" id="IPR016195">
    <property type="entry name" value="Pol/histidinol_Pase-like"/>
</dbReference>
<dbReference type="NCBIfam" id="NF006702">
    <property type="entry name" value="PRK09248.1"/>
    <property type="match status" value="1"/>
</dbReference>
<dbReference type="PANTHER" id="PTHR36928">
    <property type="entry name" value="PHOSPHATASE YCDX-RELATED"/>
    <property type="match status" value="1"/>
</dbReference>
<dbReference type="PANTHER" id="PTHR36928:SF1">
    <property type="entry name" value="PHOSPHATASE YCDX-RELATED"/>
    <property type="match status" value="1"/>
</dbReference>
<dbReference type="Pfam" id="PF02811">
    <property type="entry name" value="PHP"/>
    <property type="match status" value="1"/>
</dbReference>
<dbReference type="SMART" id="SM00481">
    <property type="entry name" value="POLIIIAc"/>
    <property type="match status" value="1"/>
</dbReference>
<dbReference type="SUPFAM" id="SSF89550">
    <property type="entry name" value="PHP domain-like"/>
    <property type="match status" value="1"/>
</dbReference>
<proteinExistence type="inferred from homology"/>
<name>YCDX_SHIFL</name>
<sequence>MYPVDLHMHTVASTHAYSTLSDYIAQAKQKGIKLFAITDHGPDMEDAPHHWHFINMRIWPRVVDGVGILRGIEANIKNVDGEIDCSGKMFDSLDLIIAGFHEPVFAPHDKATNTQAMISTIASGNVHIISHPGNPKYEIDVKAVAEAAAKHQVALEINNSSFLHSRKGSEDNCRAVAAAVRDAGGWVALGSDSHTAFTMGEFEECLKILDAVDFPLERILNVSPRRLLNFLESRGMAPIAEFADL</sequence>
<protein>
    <recommendedName>
        <fullName evidence="1">Probable phosphatase YcdX</fullName>
        <ecNumber evidence="1">3.1.3.-</ecNumber>
    </recommendedName>
</protein>
<evidence type="ECO:0000255" key="1">
    <source>
        <dbReference type="HAMAP-Rule" id="MF_01561"/>
    </source>
</evidence>
<feature type="chain" id="PRO_0000228703" description="Probable phosphatase YcdX">
    <location>
        <begin position="1"/>
        <end position="245"/>
    </location>
</feature>
<feature type="binding site" evidence="1">
    <location>
        <position position="7"/>
    </location>
    <ligand>
        <name>Zn(2+)</name>
        <dbReference type="ChEBI" id="CHEBI:29105"/>
        <label>1</label>
    </ligand>
</feature>
<feature type="binding site" evidence="1">
    <location>
        <position position="9"/>
    </location>
    <ligand>
        <name>Zn(2+)</name>
        <dbReference type="ChEBI" id="CHEBI:29105"/>
        <label>1</label>
    </ligand>
</feature>
<feature type="binding site" evidence="1">
    <location>
        <position position="15"/>
    </location>
    <ligand>
        <name>Zn(2+)</name>
        <dbReference type="ChEBI" id="CHEBI:29105"/>
        <label>2</label>
    </ligand>
</feature>
<feature type="binding site" evidence="1">
    <location>
        <position position="40"/>
    </location>
    <ligand>
        <name>Zn(2+)</name>
        <dbReference type="ChEBI" id="CHEBI:29105"/>
        <label>2</label>
    </ligand>
</feature>
<feature type="binding site" evidence="1">
    <location>
        <position position="73"/>
    </location>
    <ligand>
        <name>Zn(2+)</name>
        <dbReference type="ChEBI" id="CHEBI:29105"/>
        <label>1</label>
    </ligand>
</feature>
<feature type="binding site" evidence="1">
    <location>
        <position position="73"/>
    </location>
    <ligand>
        <name>Zn(2+)</name>
        <dbReference type="ChEBI" id="CHEBI:29105"/>
        <label>3</label>
    </ligand>
</feature>
<feature type="binding site" evidence="1">
    <location>
        <position position="101"/>
    </location>
    <ligand>
        <name>Zn(2+)</name>
        <dbReference type="ChEBI" id="CHEBI:29105"/>
        <label>3</label>
    </ligand>
</feature>
<feature type="binding site" evidence="1">
    <location>
        <position position="131"/>
    </location>
    <ligand>
        <name>Zn(2+)</name>
        <dbReference type="ChEBI" id="CHEBI:29105"/>
        <label>3</label>
    </ligand>
</feature>
<feature type="binding site" evidence="1">
    <location>
        <position position="192"/>
    </location>
    <ligand>
        <name>Zn(2+)</name>
        <dbReference type="ChEBI" id="CHEBI:29105"/>
        <label>1</label>
    </ligand>
</feature>
<feature type="binding site" evidence="1">
    <location>
        <position position="194"/>
    </location>
    <ligand>
        <name>Zn(2+)</name>
        <dbReference type="ChEBI" id="CHEBI:29105"/>
        <label>2</label>
    </ligand>
</feature>
<comment type="cofactor">
    <cofactor evidence="1">
        <name>Zn(2+)</name>
        <dbReference type="ChEBI" id="CHEBI:29105"/>
    </cofactor>
    <text evidence="1">Binds 3 Zn(2+) ions per subunit.</text>
</comment>
<comment type="subunit">
    <text evidence="1">Homotrimer.</text>
</comment>
<comment type="similarity">
    <text evidence="1">Belongs to the PHP family.</text>
</comment>